<proteinExistence type="evidence at protein level"/>
<dbReference type="EMBL" id="DAAA02030893">
    <property type="status" value="NOT_ANNOTATED_CDS"/>
    <property type="molecule type" value="Genomic_DNA"/>
</dbReference>
<dbReference type="EMBL" id="DAAA02030894">
    <property type="status" value="NOT_ANNOTATED_CDS"/>
    <property type="molecule type" value="Genomic_DNA"/>
</dbReference>
<dbReference type="SMR" id="F1MKX4"/>
<dbReference type="FunCoup" id="F1MKX4">
    <property type="interactions" value="2187"/>
</dbReference>
<dbReference type="IntAct" id="F1MKX4">
    <property type="interactions" value="1"/>
</dbReference>
<dbReference type="STRING" id="9913.ENSBTAP00000027001"/>
<dbReference type="PaxDb" id="9913-ENSBTAP00000027001"/>
<dbReference type="eggNOG" id="KOG1851">
    <property type="taxonomic scope" value="Eukaryota"/>
</dbReference>
<dbReference type="HOGENOM" id="CLU_000772_2_0_1"/>
<dbReference type="InParanoid" id="F1MKX4"/>
<dbReference type="OrthoDB" id="17907at2759"/>
<dbReference type="TreeFam" id="TF106237"/>
<dbReference type="Proteomes" id="UP000009136">
    <property type="component" value="Unplaced"/>
</dbReference>
<dbReference type="GO" id="GO:0005829">
    <property type="term" value="C:cytosol"/>
    <property type="evidence" value="ECO:0000250"/>
    <property type="project" value="UniProtKB"/>
</dbReference>
<dbReference type="GO" id="GO:0016607">
    <property type="term" value="C:nuclear speck"/>
    <property type="evidence" value="ECO:0007669"/>
    <property type="project" value="UniProtKB-SubCell"/>
</dbReference>
<dbReference type="GO" id="GO:0005634">
    <property type="term" value="C:nucleus"/>
    <property type="evidence" value="ECO:0000250"/>
    <property type="project" value="UniProtKB"/>
</dbReference>
<dbReference type="GO" id="GO:1990111">
    <property type="term" value="C:spermatoproteasome complex"/>
    <property type="evidence" value="ECO:0000250"/>
    <property type="project" value="UniProtKB"/>
</dbReference>
<dbReference type="GO" id="GO:0070577">
    <property type="term" value="F:lysine-acetylated histone binding"/>
    <property type="evidence" value="ECO:0000318"/>
    <property type="project" value="GO_Central"/>
</dbReference>
<dbReference type="GO" id="GO:0016504">
    <property type="term" value="F:peptidase activator activity"/>
    <property type="evidence" value="ECO:0000250"/>
    <property type="project" value="UniProtKB"/>
</dbReference>
<dbReference type="GO" id="GO:0070628">
    <property type="term" value="F:proteasome binding"/>
    <property type="evidence" value="ECO:0000318"/>
    <property type="project" value="GO_Central"/>
</dbReference>
<dbReference type="GO" id="GO:0006974">
    <property type="term" value="P:DNA damage response"/>
    <property type="evidence" value="ECO:0000250"/>
    <property type="project" value="UniProtKB"/>
</dbReference>
<dbReference type="GO" id="GO:0006281">
    <property type="term" value="P:DNA repair"/>
    <property type="evidence" value="ECO:0000250"/>
    <property type="project" value="UniProtKB"/>
</dbReference>
<dbReference type="GO" id="GO:0010499">
    <property type="term" value="P:proteasomal ubiquitin-independent protein catabolic process"/>
    <property type="evidence" value="ECO:0000250"/>
    <property type="project" value="UniProtKB"/>
</dbReference>
<dbReference type="GO" id="GO:0035092">
    <property type="term" value="P:sperm DNA condensation"/>
    <property type="evidence" value="ECO:0000250"/>
    <property type="project" value="UniProtKB"/>
</dbReference>
<dbReference type="FunFam" id="1.25.10.10:FF:000183">
    <property type="entry name" value="Proteasome activator complex subunit 4"/>
    <property type="match status" value="1"/>
</dbReference>
<dbReference type="Gene3D" id="1.25.10.10">
    <property type="entry name" value="Leucine-rich Repeat Variant"/>
    <property type="match status" value="1"/>
</dbReference>
<dbReference type="InterPro" id="IPR011989">
    <property type="entry name" value="ARM-like"/>
</dbReference>
<dbReference type="InterPro" id="IPR016024">
    <property type="entry name" value="ARM-type_fold"/>
</dbReference>
<dbReference type="InterPro" id="IPR032430">
    <property type="entry name" value="Blm10_mid"/>
</dbReference>
<dbReference type="InterPro" id="IPR055455">
    <property type="entry name" value="HEAT_PSME4"/>
</dbReference>
<dbReference type="InterPro" id="IPR035309">
    <property type="entry name" value="PSME4"/>
</dbReference>
<dbReference type="InterPro" id="IPR021843">
    <property type="entry name" value="PSME4_C"/>
</dbReference>
<dbReference type="PANTHER" id="PTHR32170">
    <property type="entry name" value="PROTEASOME ACTIVATOR COMPLEX SUBUNIT 4"/>
    <property type="match status" value="1"/>
</dbReference>
<dbReference type="PANTHER" id="PTHR32170:SF3">
    <property type="entry name" value="PROTEASOME ACTIVATOR COMPLEX SUBUNIT 4"/>
    <property type="match status" value="1"/>
</dbReference>
<dbReference type="Pfam" id="PF23096">
    <property type="entry name" value="HEAT_PSME4"/>
    <property type="match status" value="1"/>
</dbReference>
<dbReference type="Pfam" id="PF16507">
    <property type="entry name" value="HEAT_PSME4_mid"/>
    <property type="match status" value="1"/>
</dbReference>
<dbReference type="Pfam" id="PF11919">
    <property type="entry name" value="PSME4_C"/>
    <property type="match status" value="1"/>
</dbReference>
<dbReference type="SUPFAM" id="SSF48371">
    <property type="entry name" value="ARM repeat"/>
    <property type="match status" value="2"/>
</dbReference>
<gene>
    <name type="primary">PSME4</name>
</gene>
<protein>
    <recommendedName>
        <fullName>Proteasome activator complex subunit 4</fullName>
    </recommendedName>
    <alternativeName>
        <fullName>Proteasome activator PA200</fullName>
    </alternativeName>
</protein>
<keyword id="KW-0963">Cytoplasm</keyword>
<keyword id="KW-0217">Developmental protein</keyword>
<keyword id="KW-0221">Differentiation</keyword>
<keyword id="KW-0227">DNA damage</keyword>
<keyword id="KW-0234">DNA repair</keyword>
<keyword id="KW-0539">Nucleus</keyword>
<keyword id="KW-0597">Phosphoprotein</keyword>
<keyword id="KW-0647">Proteasome</keyword>
<keyword id="KW-1185">Reference proteome</keyword>
<keyword id="KW-0677">Repeat</keyword>
<keyword id="KW-0744">Spermatogenesis</keyword>
<feature type="chain" id="PRO_0000423299" description="Proteasome activator complex subunit 4">
    <location>
        <begin position="1"/>
        <end position="1845"/>
    </location>
</feature>
<feature type="repeat" description="HEAT 1">
    <location>
        <begin position="475"/>
        <end position="519"/>
    </location>
</feature>
<feature type="repeat" description="HEAT 2">
    <location>
        <begin position="1000"/>
        <end position="1039"/>
    </location>
</feature>
<feature type="repeat" description="HEAT 3">
    <location>
        <begin position="1181"/>
        <end position="1219"/>
    </location>
</feature>
<feature type="repeat" description="HEAT 4">
    <location>
        <begin position="1356"/>
        <end position="1394"/>
    </location>
</feature>
<feature type="repeat" description="HEAT 5">
    <location>
        <begin position="1638"/>
        <end position="1676"/>
    </location>
</feature>
<feature type="repeat" description="HEAT 6">
    <location>
        <begin position="1682"/>
        <end position="1720"/>
    </location>
</feature>
<feature type="region of interest" description="Disordered" evidence="3">
    <location>
        <begin position="1"/>
        <end position="26"/>
    </location>
</feature>
<feature type="region of interest" description="Bromodomain-like (BRDL)" evidence="1">
    <location>
        <begin position="1652"/>
        <end position="1740"/>
    </location>
</feature>
<feature type="compositionally biased region" description="Basic and acidic residues" evidence="3">
    <location>
        <begin position="1"/>
        <end position="13"/>
    </location>
</feature>
<feature type="modified residue" description="Phosphoserine" evidence="2">
    <location>
        <position position="1123"/>
    </location>
</feature>
<feature type="modified residue" description="Phosphoserine" evidence="2">
    <location>
        <position position="1616"/>
    </location>
</feature>
<reference key="1">
    <citation type="journal article" date="2009" name="Genome Biol.">
        <title>A whole-genome assembly of the domestic cow, Bos taurus.</title>
        <authorList>
            <person name="Zimin A.V."/>
            <person name="Delcher A.L."/>
            <person name="Florea L."/>
            <person name="Kelley D.R."/>
            <person name="Schatz M.C."/>
            <person name="Puiu D."/>
            <person name="Hanrahan F."/>
            <person name="Pertea G."/>
            <person name="Van Tassell C.P."/>
            <person name="Sonstegard T.S."/>
            <person name="Marcais G."/>
            <person name="Roberts M."/>
            <person name="Subramanian P."/>
            <person name="Yorke J.A."/>
            <person name="Salzberg S.L."/>
        </authorList>
    </citation>
    <scope>NUCLEOTIDE SEQUENCE [LARGE SCALE GENOMIC DNA]</scope>
    <source>
        <strain>Hereford</strain>
    </source>
</reference>
<reference key="2">
    <citation type="journal article" date="2005" name="J. Mol. Biol.">
        <title>The axial channel of the 20S proteasome opens upon binding of the PA200 activator.</title>
        <authorList>
            <person name="Ortega J."/>
            <person name="Heymann J.B."/>
            <person name="Kajava A.V."/>
            <person name="Ustrell V."/>
            <person name="Rechsteiner M."/>
            <person name="Steven A.C."/>
        </authorList>
    </citation>
    <scope>STRUCTURE OF THE PROTEASOME BY ELECTRON MICROSCOPY</scope>
</reference>
<reference key="3">
    <citation type="journal article" date="2005" name="Methods Enzymol.">
        <title>Purification and assay of proteasome activator PA200.</title>
        <authorList>
            <person name="Ustrell V."/>
            <person name="Pratt G."/>
            <person name="Gorbea C."/>
            <person name="Rechsteiner M."/>
        </authorList>
    </citation>
    <scope>IDENTIFICATION IN THE PROTEASOME</scope>
</reference>
<reference key="4">
    <citation type="journal article" date="2013" name="Cell">
        <title>Acetylation-mediated proteasomal degradation of core histones during DNA repair and spermatogenesis.</title>
        <authorList>
            <person name="Qian M.X."/>
            <person name="Pang Y."/>
            <person name="Liu C.H."/>
            <person name="Haratake K."/>
            <person name="Du B.Y."/>
            <person name="Ji D.Y."/>
            <person name="Wang G.F."/>
            <person name="Zhu Q.Q."/>
            <person name="Song W."/>
            <person name="Yu Y."/>
            <person name="Zhang X.X."/>
            <person name="Huang H.T."/>
            <person name="Miao S."/>
            <person name="Chen L.B."/>
            <person name="Zhang Z.H."/>
            <person name="Liang Y.N."/>
            <person name="Liu S."/>
            <person name="Cha H."/>
            <person name="Yang D."/>
            <person name="Zhai Y."/>
            <person name="Komatsu T."/>
            <person name="Tsuruta F."/>
            <person name="Li H."/>
            <person name="Cao C."/>
            <person name="Li W."/>
            <person name="Li G.H."/>
            <person name="Cheng Y."/>
            <person name="Chiba T."/>
            <person name="Wang L."/>
            <person name="Goldberg A.L."/>
            <person name="Shen Y."/>
            <person name="Qiu X.B."/>
        </authorList>
    </citation>
    <scope>IDENTIFICATION IN THE SPERMATOPROTEASOME</scope>
</reference>
<name>PSME4_BOVIN</name>
<evidence type="ECO:0000250" key="1"/>
<evidence type="ECO:0000250" key="2">
    <source>
        <dbReference type="UniProtKB" id="Q14997"/>
    </source>
</evidence>
<evidence type="ECO:0000256" key="3">
    <source>
        <dbReference type="SAM" id="MobiDB-lite"/>
    </source>
</evidence>
<evidence type="ECO:0000269" key="4">
    <source>
    </source>
</evidence>
<evidence type="ECO:0000269" key="5">
    <source>
    </source>
</evidence>
<evidence type="ECO:0000305" key="6"/>
<comment type="function">
    <text evidence="1">Associated component of the proteasome that specifically recognizes acetylated histones and promotes ATP- and ubiquitin-independent degradation of core histones during spermatogenesis and DNA damage response. Recognizes and binds acetylated histones via its bromodomain-like (BRDL) region and activates the proteasome by opening the gated channel for substrate entry. Binds to the core proteasome via its C-terminus, which occupies the same binding sites as the proteasomal ATPases, opening the closed structure of the proteasome via an active gating mechanism. Component of the spermatoproteasome, a form of the proteasome specifically found in testis: binds to acetylated histones and promotes degradation of histones, thereby participating actively to the exchange of histones during spermatogenesis. Also involved in DNA damage response in somatic cells, by promoting degradation of histones following DNA double-strand breaks (By similarity).</text>
</comment>
<comment type="subunit">
    <text evidence="1 4 5">Homodimer. Component of the spermatoproteasome, a form of the proteasome specifically found in testis (By similarity). Interacts with the 20S and 26S proteasomes.</text>
</comment>
<comment type="subcellular location">
    <subcellularLocation>
        <location evidence="1">Cytoplasm</location>
        <location evidence="1">Cytosol</location>
    </subcellularLocation>
    <subcellularLocation>
        <location evidence="1">Nucleus</location>
    </subcellularLocation>
    <subcellularLocation>
        <location evidence="1">Nucleus speckle</location>
    </subcellularLocation>
    <text evidence="1">Found in nuclear foci following treatment with ionizing radiation, but not with ultraviolet irradiation or H(2)O(2).</text>
</comment>
<comment type="domain">
    <text evidence="1">The bromodomain-like (BRDL) region specifically recognizes and binds acetylated histones.</text>
</comment>
<comment type="PTM">
    <text evidence="1">Phosphorylated.</text>
</comment>
<comment type="similarity">
    <text evidence="6">Belongs to the BLM10 family.</text>
</comment>
<sequence length="1845" mass="211600">MEPAERAGGRDPLEPGGRPGPDPQGFVPQKEIVYNKLLPYAERLDAESDLQLAQIKSNLGRAVQLQELWPGGLFWTRKLSTYHRLYGRKFSKEDHVLFIKLLYELVSIPKLEISMMQGFARLLINLLKKKELLSRDDLELPWRPLYDMVERILYSKTEHLGLNWFPNSVENVLKTLVKSCRPYFPADATAEMLEEWRPLMCPFDVTMQKAITYFEIFLPTSLPPELHHKGFKLWFDELIGLWVSVQNLPQWEGQLVNLFARLATDNIGYIDWDPYVPKVFTRILRSLNLPVGSSQVLVPRFLTNAYDIGHAVVWITAMMGGPSKLVQKHLAGLFNSITSFYHPSNNGRWLNKLMKLLQRLPNSVVRRLHRERYKKPSWLTPVPDSHKLTDQDVTDFVQCIIQPVLLAMFSKTGSLEAAQALQNLALMRPELVIPPVLERTYPALETLTEPHQLTATLSCVIGVARSLVSGGRWFPEGPTHMLPLLMRALPGVDPNDFSKCMITFQFIATFSTLVPLVDCSSVLQERNDLTEVERELCSATAEFEDFVLQFMDRCFGLIESSTLEQTREETETEKMTHLESLVELGLSSTFSTILTQCSKEIFMVALQKVFNFSISHIFETRVAGRMVADMCRAAVKCCPEESLKLFVPHCCGVITQLTMNDDVLNEEELDKELLWNLQLLSEITRVDGKKLLLYREQLVKILQRTLHLTCKQGYTLSCNLLHHLLRSTTLIYPTEYCSVPGGFDKPPSEYFPIKDWGKPGDLWNLGIQWHVPSSEEVAFAFYLLDSFLQPELIKLQRCGDGELEMSRDDVLQSLTIVHNCLIGSGNLLPPLKGEPVTNLVPSMVSLEETKLYTGLEYEIDLSRENYRETIARVIRKLLNHILNNSEDDTKSLFLIIKIIGDLLQFQGSHKHEFDSRWKSFNLVKKSMENRLHGKKQHIRALLIDRVMLQHELRTLTVEGCEYKKIHQEMIRDLLRLSTSSYSQVRNKAQQTFFAALGAYNFCCRDIIPLVLGFLRPDRQDVTQQQFKGALYCLLGNHSGVCLANLHDWDCIVQTWPAIVSSGLSQAMSLEKPSIVRLFDDLAEKIHRQYETIGLDFTVSKSCVGIAELLQQSKNPSINQTMLSSEEIKEGLKRQQGRNVDALRNYENLVNTLLDGVEQRNLPWKFEHIGIGLLSLLLRDDRVLPLRAIRFFVENLNHDAIVVRKMAISAVAGILKQLKRTHKKLTISPYEISGYPKPTQIVAGDRPDNHWLHYDSKSIPRTKKEWESSCFVEKTHWGYYTWPQNMVVYAGVEEQPKLGRSREDLTEAEQIIFDHFSDPKFVEQLITFLSLEDRKGKDKFNPRRFCLFKGIFRNFDDAFLPVLKPHLERLVADSHESTQRCVAEIIAGLIRGSKHWTFEKVEKLWELLCPLLRTALSNITVETYNDWGTCIATSCESRDPRKLHWLFELLLESPLSGEGGSFVDACRLYVLQGGLAQQEWRVPELLHRLLKYLEPKLTQVYKNVRERIGSVLTYIFMIDVSLPNTAPTASPRVPEFTARILEKLKPLMDVDEEIQNHVMEENGIGEEDERTQGIKLLKTILKWLMASAGRSFSTAVAEQLQLLPLFFKIAPVENDNSYDELKRDAKLCLSLMSQGLLYPHQVPLVLQVLNQTARSSSWHARYTVLTYLQTMVFYNLFIFLNNEDAVKDIRWLVISLLEDEQLEVREMAATTLSGLLQCNFLTMDSPMQIHFEQLCKTKLPKKRKRDPGFVGDTIPSAELVKRHAGVLGLGACVLSSPYDVPTWMPQLLMNLSAHLNDPQPIEMTVKKTLSNFRRTHHDNWQEHKQQFTDDQLLVLTDLLVSPCYYA</sequence>
<organism>
    <name type="scientific">Bos taurus</name>
    <name type="common">Bovine</name>
    <dbReference type="NCBI Taxonomy" id="9913"/>
    <lineage>
        <taxon>Eukaryota</taxon>
        <taxon>Metazoa</taxon>
        <taxon>Chordata</taxon>
        <taxon>Craniata</taxon>
        <taxon>Vertebrata</taxon>
        <taxon>Euteleostomi</taxon>
        <taxon>Mammalia</taxon>
        <taxon>Eutheria</taxon>
        <taxon>Laurasiatheria</taxon>
        <taxon>Artiodactyla</taxon>
        <taxon>Ruminantia</taxon>
        <taxon>Pecora</taxon>
        <taxon>Bovidae</taxon>
        <taxon>Bovinae</taxon>
        <taxon>Bos</taxon>
    </lineage>
</organism>
<accession>F1MKX4</accession>